<gene>
    <name evidence="1" type="primary">recR</name>
    <name type="ordered locus">SPT_1611</name>
</gene>
<evidence type="ECO:0000255" key="1">
    <source>
        <dbReference type="HAMAP-Rule" id="MF_00017"/>
    </source>
</evidence>
<keyword id="KW-0227">DNA damage</keyword>
<keyword id="KW-0233">DNA recombination</keyword>
<keyword id="KW-0234">DNA repair</keyword>
<keyword id="KW-0479">Metal-binding</keyword>
<keyword id="KW-0862">Zinc</keyword>
<keyword id="KW-0863">Zinc-finger</keyword>
<reference key="1">
    <citation type="journal article" date="2010" name="Genome Biol.">
        <title>Structure and dynamics of the pan-genome of Streptococcus pneumoniae and closely related species.</title>
        <authorList>
            <person name="Donati C."/>
            <person name="Hiller N.L."/>
            <person name="Tettelin H."/>
            <person name="Muzzi A."/>
            <person name="Croucher N.J."/>
            <person name="Angiuoli S.V."/>
            <person name="Oggioni M."/>
            <person name="Dunning Hotopp J.C."/>
            <person name="Hu F.Z."/>
            <person name="Riley D.R."/>
            <person name="Covacci A."/>
            <person name="Mitchell T.J."/>
            <person name="Bentley S.D."/>
            <person name="Kilian M."/>
            <person name="Ehrlich G.D."/>
            <person name="Rappuoli R."/>
            <person name="Moxon E.R."/>
            <person name="Masignani V."/>
        </authorList>
    </citation>
    <scope>NUCLEOTIDE SEQUENCE [LARGE SCALE GENOMIC DNA]</scope>
    <source>
        <strain>Taiwan19F-14</strain>
    </source>
</reference>
<feature type="chain" id="PRO_1000195415" description="Recombination protein RecR">
    <location>
        <begin position="1"/>
        <end position="198"/>
    </location>
</feature>
<feature type="domain" description="Toprim" evidence="1">
    <location>
        <begin position="80"/>
        <end position="175"/>
    </location>
</feature>
<feature type="zinc finger region" description="C4-type" evidence="1">
    <location>
        <begin position="57"/>
        <end position="72"/>
    </location>
</feature>
<protein>
    <recommendedName>
        <fullName evidence="1">Recombination protein RecR</fullName>
    </recommendedName>
</protein>
<sequence length="198" mass="21689">MLYPTPIAKLIDSYSKLPGIGIKTATRLAFYTIGMSADDVNEFAKNLLSAKRELTYCSICGRLTDDDPCSICTDPTRDQTTILVLEDSRDVAAMENIQEYHGLYHVLHGLISPMNGISPDDINLKSLMTRLMDSEVSEVIVATNATADGEATSMYLSRLLKPAGIKVTRLARGLAVGADIEYADEVTLLRAIENRTEL</sequence>
<accession>C1CST7</accession>
<dbReference type="EMBL" id="CP000921">
    <property type="protein sequence ID" value="ACO23537.1"/>
    <property type="molecule type" value="Genomic_DNA"/>
</dbReference>
<dbReference type="RefSeq" id="WP_000966743.1">
    <property type="nucleotide sequence ID" value="NC_012469.1"/>
</dbReference>
<dbReference type="SMR" id="C1CST7"/>
<dbReference type="GeneID" id="45653117"/>
<dbReference type="KEGG" id="snt:SPT_1611"/>
<dbReference type="HOGENOM" id="CLU_060739_1_0_9"/>
<dbReference type="GO" id="GO:0003677">
    <property type="term" value="F:DNA binding"/>
    <property type="evidence" value="ECO:0007669"/>
    <property type="project" value="UniProtKB-UniRule"/>
</dbReference>
<dbReference type="GO" id="GO:0008270">
    <property type="term" value="F:zinc ion binding"/>
    <property type="evidence" value="ECO:0007669"/>
    <property type="project" value="UniProtKB-KW"/>
</dbReference>
<dbReference type="GO" id="GO:0006310">
    <property type="term" value="P:DNA recombination"/>
    <property type="evidence" value="ECO:0007669"/>
    <property type="project" value="UniProtKB-UniRule"/>
</dbReference>
<dbReference type="GO" id="GO:0006281">
    <property type="term" value="P:DNA repair"/>
    <property type="evidence" value="ECO:0007669"/>
    <property type="project" value="UniProtKB-UniRule"/>
</dbReference>
<dbReference type="CDD" id="cd01025">
    <property type="entry name" value="TOPRIM_recR"/>
    <property type="match status" value="1"/>
</dbReference>
<dbReference type="Gene3D" id="3.30.60.80">
    <property type="match status" value="1"/>
</dbReference>
<dbReference type="Gene3D" id="3.40.1360.10">
    <property type="match status" value="1"/>
</dbReference>
<dbReference type="Gene3D" id="6.10.250.240">
    <property type="match status" value="1"/>
</dbReference>
<dbReference type="Gene3D" id="1.10.8.420">
    <property type="entry name" value="RecR Domain 1"/>
    <property type="match status" value="1"/>
</dbReference>
<dbReference type="HAMAP" id="MF_00017">
    <property type="entry name" value="RecR"/>
    <property type="match status" value="1"/>
</dbReference>
<dbReference type="InterPro" id="IPR000093">
    <property type="entry name" value="DNA_Rcmb_RecR"/>
</dbReference>
<dbReference type="InterPro" id="IPR023627">
    <property type="entry name" value="Rcmb_RecR"/>
</dbReference>
<dbReference type="InterPro" id="IPR015967">
    <property type="entry name" value="Rcmb_RecR_Znf"/>
</dbReference>
<dbReference type="InterPro" id="IPR006171">
    <property type="entry name" value="TOPRIM_dom"/>
</dbReference>
<dbReference type="InterPro" id="IPR034137">
    <property type="entry name" value="TOPRIM_RecR"/>
</dbReference>
<dbReference type="NCBIfam" id="TIGR00615">
    <property type="entry name" value="recR"/>
    <property type="match status" value="1"/>
</dbReference>
<dbReference type="PANTHER" id="PTHR30446">
    <property type="entry name" value="RECOMBINATION PROTEIN RECR"/>
    <property type="match status" value="1"/>
</dbReference>
<dbReference type="PANTHER" id="PTHR30446:SF0">
    <property type="entry name" value="RECOMBINATION PROTEIN RECR"/>
    <property type="match status" value="1"/>
</dbReference>
<dbReference type="Pfam" id="PF21175">
    <property type="entry name" value="RecR_C"/>
    <property type="match status" value="1"/>
</dbReference>
<dbReference type="Pfam" id="PF21176">
    <property type="entry name" value="RecR_HhH"/>
    <property type="match status" value="1"/>
</dbReference>
<dbReference type="Pfam" id="PF02132">
    <property type="entry name" value="RecR_ZnF"/>
    <property type="match status" value="1"/>
</dbReference>
<dbReference type="Pfam" id="PF13662">
    <property type="entry name" value="Toprim_4"/>
    <property type="match status" value="1"/>
</dbReference>
<dbReference type="SMART" id="SM00493">
    <property type="entry name" value="TOPRIM"/>
    <property type="match status" value="1"/>
</dbReference>
<dbReference type="SUPFAM" id="SSF111304">
    <property type="entry name" value="Recombination protein RecR"/>
    <property type="match status" value="1"/>
</dbReference>
<dbReference type="PROSITE" id="PS01300">
    <property type="entry name" value="RECR"/>
    <property type="match status" value="1"/>
</dbReference>
<dbReference type="PROSITE" id="PS50880">
    <property type="entry name" value="TOPRIM"/>
    <property type="match status" value="1"/>
</dbReference>
<name>RECR_STRZT</name>
<proteinExistence type="inferred from homology"/>
<comment type="function">
    <text evidence="1">May play a role in DNA repair. It seems to be involved in an RecBC-independent recombinational process of DNA repair. It may act with RecF and RecO.</text>
</comment>
<comment type="similarity">
    <text evidence="1">Belongs to the RecR family.</text>
</comment>
<organism>
    <name type="scientific">Streptococcus pneumoniae (strain Taiwan19F-14)</name>
    <dbReference type="NCBI Taxonomy" id="487213"/>
    <lineage>
        <taxon>Bacteria</taxon>
        <taxon>Bacillati</taxon>
        <taxon>Bacillota</taxon>
        <taxon>Bacilli</taxon>
        <taxon>Lactobacillales</taxon>
        <taxon>Streptococcaceae</taxon>
        <taxon>Streptococcus</taxon>
    </lineage>
</organism>